<feature type="chain" id="PRO_1000115861" description="Enolase">
    <location>
        <begin position="1"/>
        <end position="432"/>
    </location>
</feature>
<feature type="active site" description="Proton donor" evidence="1">
    <location>
        <position position="209"/>
    </location>
</feature>
<feature type="active site" description="Proton acceptor" evidence="1">
    <location>
        <position position="342"/>
    </location>
</feature>
<feature type="binding site" evidence="1">
    <location>
        <position position="167"/>
    </location>
    <ligand>
        <name>(2R)-2-phosphoglycerate</name>
        <dbReference type="ChEBI" id="CHEBI:58289"/>
    </ligand>
</feature>
<feature type="binding site" evidence="1">
    <location>
        <position position="246"/>
    </location>
    <ligand>
        <name>Mg(2+)</name>
        <dbReference type="ChEBI" id="CHEBI:18420"/>
    </ligand>
</feature>
<feature type="binding site" evidence="1">
    <location>
        <position position="290"/>
    </location>
    <ligand>
        <name>Mg(2+)</name>
        <dbReference type="ChEBI" id="CHEBI:18420"/>
    </ligand>
</feature>
<feature type="binding site" evidence="1">
    <location>
        <position position="317"/>
    </location>
    <ligand>
        <name>Mg(2+)</name>
        <dbReference type="ChEBI" id="CHEBI:18420"/>
    </ligand>
</feature>
<feature type="binding site" evidence="1">
    <location>
        <position position="342"/>
    </location>
    <ligand>
        <name>(2R)-2-phosphoglycerate</name>
        <dbReference type="ChEBI" id="CHEBI:58289"/>
    </ligand>
</feature>
<feature type="binding site" evidence="1">
    <location>
        <position position="371"/>
    </location>
    <ligand>
        <name>(2R)-2-phosphoglycerate</name>
        <dbReference type="ChEBI" id="CHEBI:58289"/>
    </ligand>
</feature>
<feature type="binding site" evidence="1">
    <location>
        <position position="372"/>
    </location>
    <ligand>
        <name>(2R)-2-phosphoglycerate</name>
        <dbReference type="ChEBI" id="CHEBI:58289"/>
    </ligand>
</feature>
<feature type="binding site" evidence="1">
    <location>
        <position position="393"/>
    </location>
    <ligand>
        <name>(2R)-2-phosphoglycerate</name>
        <dbReference type="ChEBI" id="CHEBI:58289"/>
    </ligand>
</feature>
<name>ENO_ECOSE</name>
<comment type="function">
    <text evidence="1">Catalyzes the reversible conversion of 2-phosphoglycerate (2-PG) into phosphoenolpyruvate (PEP). It is essential for the degradation of carbohydrates via glycolysis.</text>
</comment>
<comment type="catalytic activity">
    <reaction evidence="1">
        <text>(2R)-2-phosphoglycerate = phosphoenolpyruvate + H2O</text>
        <dbReference type="Rhea" id="RHEA:10164"/>
        <dbReference type="ChEBI" id="CHEBI:15377"/>
        <dbReference type="ChEBI" id="CHEBI:58289"/>
        <dbReference type="ChEBI" id="CHEBI:58702"/>
        <dbReference type="EC" id="4.2.1.11"/>
    </reaction>
</comment>
<comment type="cofactor">
    <cofactor evidence="1">
        <name>Mg(2+)</name>
        <dbReference type="ChEBI" id="CHEBI:18420"/>
    </cofactor>
    <text evidence="1">Binds a second Mg(2+) ion via substrate during catalysis.</text>
</comment>
<comment type="pathway">
    <text evidence="1">Carbohydrate degradation; glycolysis; pyruvate from D-glyceraldehyde 3-phosphate: step 4/5.</text>
</comment>
<comment type="subunit">
    <text evidence="1">Component of the RNA degradosome, a multiprotein complex involved in RNA processing and mRNA degradation.</text>
</comment>
<comment type="subcellular location">
    <subcellularLocation>
        <location evidence="1">Cytoplasm</location>
    </subcellularLocation>
    <subcellularLocation>
        <location evidence="1">Secreted</location>
    </subcellularLocation>
    <subcellularLocation>
        <location evidence="1">Cell surface</location>
    </subcellularLocation>
    <text evidence="1">Fractions of enolase are present in both the cytoplasm and on the cell surface.</text>
</comment>
<comment type="similarity">
    <text evidence="1">Belongs to the enolase family.</text>
</comment>
<reference key="1">
    <citation type="journal article" date="2008" name="DNA Res.">
        <title>Complete genome sequence and comparative analysis of the wild-type commensal Escherichia coli strain SE11 isolated from a healthy adult.</title>
        <authorList>
            <person name="Oshima K."/>
            <person name="Toh H."/>
            <person name="Ogura Y."/>
            <person name="Sasamoto H."/>
            <person name="Morita H."/>
            <person name="Park S.-H."/>
            <person name="Ooka T."/>
            <person name="Iyoda S."/>
            <person name="Taylor T.D."/>
            <person name="Hayashi T."/>
            <person name="Itoh K."/>
            <person name="Hattori M."/>
        </authorList>
    </citation>
    <scope>NUCLEOTIDE SEQUENCE [LARGE SCALE GENOMIC DNA]</scope>
    <source>
        <strain>SE11</strain>
    </source>
</reference>
<gene>
    <name evidence="1" type="primary">eno</name>
    <name type="ordered locus">ECSE_3037</name>
</gene>
<accession>B6I6H5</accession>
<proteinExistence type="inferred from homology"/>
<organism>
    <name type="scientific">Escherichia coli (strain SE11)</name>
    <dbReference type="NCBI Taxonomy" id="409438"/>
    <lineage>
        <taxon>Bacteria</taxon>
        <taxon>Pseudomonadati</taxon>
        <taxon>Pseudomonadota</taxon>
        <taxon>Gammaproteobacteria</taxon>
        <taxon>Enterobacterales</taxon>
        <taxon>Enterobacteriaceae</taxon>
        <taxon>Escherichia</taxon>
    </lineage>
</organism>
<dbReference type="EC" id="4.2.1.11" evidence="1"/>
<dbReference type="EMBL" id="AP009240">
    <property type="protein sequence ID" value="BAG78561.1"/>
    <property type="molecule type" value="Genomic_DNA"/>
</dbReference>
<dbReference type="RefSeq" id="WP_000036723.1">
    <property type="nucleotide sequence ID" value="NC_011415.1"/>
</dbReference>
<dbReference type="SMR" id="B6I6H5"/>
<dbReference type="GeneID" id="93779219"/>
<dbReference type="KEGG" id="ecy:ECSE_3037"/>
<dbReference type="HOGENOM" id="CLU_031223_2_1_6"/>
<dbReference type="UniPathway" id="UPA00109">
    <property type="reaction ID" value="UER00187"/>
</dbReference>
<dbReference type="Proteomes" id="UP000008199">
    <property type="component" value="Chromosome"/>
</dbReference>
<dbReference type="GO" id="GO:0009986">
    <property type="term" value="C:cell surface"/>
    <property type="evidence" value="ECO:0007669"/>
    <property type="project" value="UniProtKB-SubCell"/>
</dbReference>
<dbReference type="GO" id="GO:0005576">
    <property type="term" value="C:extracellular region"/>
    <property type="evidence" value="ECO:0007669"/>
    <property type="project" value="UniProtKB-SubCell"/>
</dbReference>
<dbReference type="GO" id="GO:0000015">
    <property type="term" value="C:phosphopyruvate hydratase complex"/>
    <property type="evidence" value="ECO:0007669"/>
    <property type="project" value="InterPro"/>
</dbReference>
<dbReference type="GO" id="GO:0000287">
    <property type="term" value="F:magnesium ion binding"/>
    <property type="evidence" value="ECO:0007669"/>
    <property type="project" value="UniProtKB-UniRule"/>
</dbReference>
<dbReference type="GO" id="GO:0004634">
    <property type="term" value="F:phosphopyruvate hydratase activity"/>
    <property type="evidence" value="ECO:0007669"/>
    <property type="project" value="UniProtKB-UniRule"/>
</dbReference>
<dbReference type="GO" id="GO:0006096">
    <property type="term" value="P:glycolytic process"/>
    <property type="evidence" value="ECO:0007669"/>
    <property type="project" value="UniProtKB-UniRule"/>
</dbReference>
<dbReference type="CDD" id="cd03313">
    <property type="entry name" value="enolase"/>
    <property type="match status" value="1"/>
</dbReference>
<dbReference type="FunFam" id="3.20.20.120:FF:000001">
    <property type="entry name" value="Enolase"/>
    <property type="match status" value="1"/>
</dbReference>
<dbReference type="FunFam" id="3.30.390.10:FF:000001">
    <property type="entry name" value="Enolase"/>
    <property type="match status" value="1"/>
</dbReference>
<dbReference type="Gene3D" id="3.20.20.120">
    <property type="entry name" value="Enolase-like C-terminal domain"/>
    <property type="match status" value="1"/>
</dbReference>
<dbReference type="Gene3D" id="3.30.390.10">
    <property type="entry name" value="Enolase-like, N-terminal domain"/>
    <property type="match status" value="1"/>
</dbReference>
<dbReference type="HAMAP" id="MF_00318">
    <property type="entry name" value="Enolase"/>
    <property type="match status" value="1"/>
</dbReference>
<dbReference type="InterPro" id="IPR000941">
    <property type="entry name" value="Enolase"/>
</dbReference>
<dbReference type="InterPro" id="IPR036849">
    <property type="entry name" value="Enolase-like_C_sf"/>
</dbReference>
<dbReference type="InterPro" id="IPR029017">
    <property type="entry name" value="Enolase-like_N"/>
</dbReference>
<dbReference type="InterPro" id="IPR020810">
    <property type="entry name" value="Enolase_C"/>
</dbReference>
<dbReference type="InterPro" id="IPR020809">
    <property type="entry name" value="Enolase_CS"/>
</dbReference>
<dbReference type="InterPro" id="IPR020811">
    <property type="entry name" value="Enolase_N"/>
</dbReference>
<dbReference type="NCBIfam" id="TIGR01060">
    <property type="entry name" value="eno"/>
    <property type="match status" value="1"/>
</dbReference>
<dbReference type="PANTHER" id="PTHR11902">
    <property type="entry name" value="ENOLASE"/>
    <property type="match status" value="1"/>
</dbReference>
<dbReference type="PANTHER" id="PTHR11902:SF1">
    <property type="entry name" value="ENOLASE"/>
    <property type="match status" value="1"/>
</dbReference>
<dbReference type="Pfam" id="PF00113">
    <property type="entry name" value="Enolase_C"/>
    <property type="match status" value="1"/>
</dbReference>
<dbReference type="Pfam" id="PF03952">
    <property type="entry name" value="Enolase_N"/>
    <property type="match status" value="1"/>
</dbReference>
<dbReference type="PIRSF" id="PIRSF001400">
    <property type="entry name" value="Enolase"/>
    <property type="match status" value="1"/>
</dbReference>
<dbReference type="PRINTS" id="PR00148">
    <property type="entry name" value="ENOLASE"/>
</dbReference>
<dbReference type="SFLD" id="SFLDS00001">
    <property type="entry name" value="Enolase"/>
    <property type="match status" value="1"/>
</dbReference>
<dbReference type="SFLD" id="SFLDF00002">
    <property type="entry name" value="enolase"/>
    <property type="match status" value="1"/>
</dbReference>
<dbReference type="SMART" id="SM01192">
    <property type="entry name" value="Enolase_C"/>
    <property type="match status" value="1"/>
</dbReference>
<dbReference type="SMART" id="SM01193">
    <property type="entry name" value="Enolase_N"/>
    <property type="match status" value="1"/>
</dbReference>
<dbReference type="SUPFAM" id="SSF51604">
    <property type="entry name" value="Enolase C-terminal domain-like"/>
    <property type="match status" value="1"/>
</dbReference>
<dbReference type="SUPFAM" id="SSF54826">
    <property type="entry name" value="Enolase N-terminal domain-like"/>
    <property type="match status" value="1"/>
</dbReference>
<dbReference type="PROSITE" id="PS00164">
    <property type="entry name" value="ENOLASE"/>
    <property type="match status" value="1"/>
</dbReference>
<sequence length="432" mass="45655">MSKIVKIIGREIIDSRGNPTVEAEVHLEGGFVGMAAAPSGASTGSREALELRDGDKSRFLGKGVTKAVAAVNGPIAQALIGKDAKDQAGIDKIMIDLDGTENKSKFGANAILAVSLANAKAAAAAKGMPLYEHIAELNGTPGKYSMPVPMMNIINGGEHADNNVDIQEFMIQPVGAKTVKEAIRMGSEVFHHLAKVLKAKGMNTAVGDEGGYAPNLGSNAEALAVIAEAVKAAGYELGKDITLAMDCAASEFYKDGKYVLAGEGNKAFTSEEFTHFLEELTKQYPIVSIEDGLDESDWDGFAYQTKVLGDKIQLVGDDLFVTNTKILKEGIEKGIANSILIKFNQIGSLTETLAAIKMAKDAGYTAVISHRSGETEDATIADLAVGTAAGQIKTGSMSRSDRVAKYNQLIRIEEALGEKAPYNGRKEIKGQA</sequence>
<evidence type="ECO:0000255" key="1">
    <source>
        <dbReference type="HAMAP-Rule" id="MF_00318"/>
    </source>
</evidence>
<keyword id="KW-0963">Cytoplasm</keyword>
<keyword id="KW-0324">Glycolysis</keyword>
<keyword id="KW-0456">Lyase</keyword>
<keyword id="KW-0460">Magnesium</keyword>
<keyword id="KW-0479">Metal-binding</keyword>
<keyword id="KW-0964">Secreted</keyword>
<protein>
    <recommendedName>
        <fullName evidence="1">Enolase</fullName>
        <ecNumber evidence="1">4.2.1.11</ecNumber>
    </recommendedName>
    <alternativeName>
        <fullName evidence="1">2-phospho-D-glycerate hydro-lyase</fullName>
    </alternativeName>
    <alternativeName>
        <fullName evidence="1">2-phosphoglycerate dehydratase</fullName>
    </alternativeName>
</protein>